<comment type="function">
    <text evidence="1">Forms part of the ribosomal stalk, playing a central role in the interaction of the ribosome with GTP-bound translation factors.</text>
</comment>
<comment type="subunit">
    <text evidence="1">Part of the ribosomal stalk of the 50S ribosomal subunit. The N-terminus interacts with L11 and the large rRNA to form the base of the stalk. The C-terminus forms an elongated spine to which L12 dimers bind in a sequential fashion forming a multimeric L10(L12)X complex.</text>
</comment>
<comment type="similarity">
    <text evidence="1">Belongs to the universal ribosomal protein uL10 family.</text>
</comment>
<organism>
    <name type="scientific">Clostridium tetani (strain Massachusetts / E88)</name>
    <dbReference type="NCBI Taxonomy" id="212717"/>
    <lineage>
        <taxon>Bacteria</taxon>
        <taxon>Bacillati</taxon>
        <taxon>Bacillota</taxon>
        <taxon>Clostridia</taxon>
        <taxon>Eubacteriales</taxon>
        <taxon>Clostridiaceae</taxon>
        <taxon>Clostridium</taxon>
    </lineage>
</organism>
<reference key="1">
    <citation type="journal article" date="2003" name="Proc. Natl. Acad. Sci. U.S.A.">
        <title>The genome sequence of Clostridium tetani, the causative agent of tetanus disease.</title>
        <authorList>
            <person name="Brueggemann H."/>
            <person name="Baeumer S."/>
            <person name="Fricke W.F."/>
            <person name="Wiezer A."/>
            <person name="Liesegang H."/>
            <person name="Decker I."/>
            <person name="Herzberg C."/>
            <person name="Martinez-Arias R."/>
            <person name="Merkl R."/>
            <person name="Henne A."/>
            <person name="Gottschalk G."/>
        </authorList>
    </citation>
    <scope>NUCLEOTIDE SEQUENCE [LARGE SCALE GENOMIC DNA]</scope>
    <source>
        <strain>Massachusetts / E88</strain>
    </source>
</reference>
<protein>
    <recommendedName>
        <fullName evidence="1">Large ribosomal subunit protein uL10</fullName>
    </recommendedName>
    <alternativeName>
        <fullName evidence="2">50S ribosomal protein L10</fullName>
    </alternativeName>
</protein>
<accession>Q890N3</accession>
<gene>
    <name evidence="1" type="primary">rplJ</name>
    <name type="ordered locus">CTC_02610</name>
</gene>
<proteinExistence type="inferred from homology"/>
<feature type="chain" id="PRO_0000154619" description="Large ribosomal subunit protein uL10">
    <location>
        <begin position="1"/>
        <end position="172"/>
    </location>
</feature>
<name>RL10_CLOTE</name>
<sequence>MRRWHTVSKNRQLKEAKVAEIKEKMEKAECIVLADYQGLTVEEATELRKKMREEGVEYKVFKNTLSILAAKELGYEGITDLFQGPISIAFGYEDPTAPARILNDFAKDHKKLELKGGMVQGEVYDEDKIKALAAIPPRDVLIAKLLGSFKAPVSNFAYLINAIKEKKESEEA</sequence>
<dbReference type="EMBL" id="AE015927">
    <property type="protein sequence ID" value="AAO37063.1"/>
    <property type="molecule type" value="Genomic_DNA"/>
</dbReference>
<dbReference type="SMR" id="Q890N3"/>
<dbReference type="STRING" id="212717.CTC_02610"/>
<dbReference type="KEGG" id="ctc:CTC_02610"/>
<dbReference type="HOGENOM" id="CLU_092227_2_0_9"/>
<dbReference type="Proteomes" id="UP000001412">
    <property type="component" value="Chromosome"/>
</dbReference>
<dbReference type="GO" id="GO:1990904">
    <property type="term" value="C:ribonucleoprotein complex"/>
    <property type="evidence" value="ECO:0007669"/>
    <property type="project" value="UniProtKB-KW"/>
</dbReference>
<dbReference type="GO" id="GO:0005840">
    <property type="term" value="C:ribosome"/>
    <property type="evidence" value="ECO:0007669"/>
    <property type="project" value="UniProtKB-KW"/>
</dbReference>
<dbReference type="GO" id="GO:0070180">
    <property type="term" value="F:large ribosomal subunit rRNA binding"/>
    <property type="evidence" value="ECO:0007669"/>
    <property type="project" value="UniProtKB-UniRule"/>
</dbReference>
<dbReference type="GO" id="GO:0006412">
    <property type="term" value="P:translation"/>
    <property type="evidence" value="ECO:0007669"/>
    <property type="project" value="UniProtKB-UniRule"/>
</dbReference>
<dbReference type="CDD" id="cd05797">
    <property type="entry name" value="Ribosomal_L10"/>
    <property type="match status" value="1"/>
</dbReference>
<dbReference type="Gene3D" id="3.30.70.1730">
    <property type="match status" value="1"/>
</dbReference>
<dbReference type="Gene3D" id="6.10.250.290">
    <property type="match status" value="1"/>
</dbReference>
<dbReference type="HAMAP" id="MF_00362">
    <property type="entry name" value="Ribosomal_uL10"/>
    <property type="match status" value="1"/>
</dbReference>
<dbReference type="InterPro" id="IPR001790">
    <property type="entry name" value="Ribosomal_uL10"/>
</dbReference>
<dbReference type="InterPro" id="IPR043141">
    <property type="entry name" value="Ribosomal_uL10-like_sf"/>
</dbReference>
<dbReference type="InterPro" id="IPR022973">
    <property type="entry name" value="Ribosomal_uL10_bac"/>
</dbReference>
<dbReference type="InterPro" id="IPR047865">
    <property type="entry name" value="Ribosomal_uL10_bac_type"/>
</dbReference>
<dbReference type="NCBIfam" id="NF000955">
    <property type="entry name" value="PRK00099.1-1"/>
    <property type="match status" value="1"/>
</dbReference>
<dbReference type="PANTHER" id="PTHR11560">
    <property type="entry name" value="39S RIBOSOMAL PROTEIN L10, MITOCHONDRIAL"/>
    <property type="match status" value="1"/>
</dbReference>
<dbReference type="Pfam" id="PF00466">
    <property type="entry name" value="Ribosomal_L10"/>
    <property type="match status" value="1"/>
</dbReference>
<dbReference type="SUPFAM" id="SSF160369">
    <property type="entry name" value="Ribosomal protein L10-like"/>
    <property type="match status" value="1"/>
</dbReference>
<evidence type="ECO:0000255" key="1">
    <source>
        <dbReference type="HAMAP-Rule" id="MF_00362"/>
    </source>
</evidence>
<evidence type="ECO:0000305" key="2"/>
<keyword id="KW-1185">Reference proteome</keyword>
<keyword id="KW-0687">Ribonucleoprotein</keyword>
<keyword id="KW-0689">Ribosomal protein</keyword>
<keyword id="KW-0694">RNA-binding</keyword>
<keyword id="KW-0699">rRNA-binding</keyword>